<name>CLKA_DICDI</name>
<proteinExistence type="inferred from homology"/>
<protein>
    <recommendedName>
        <fullName>Probable serine/threonine-protein kinase clkA</fullName>
        <ecNumber>2.7.11.1</ecNumber>
    </recommendedName>
    <alternativeName>
        <fullName>CDC2-like kinase A</fullName>
    </alternativeName>
</protein>
<evidence type="ECO:0000255" key="1">
    <source>
        <dbReference type="PROSITE-ProRule" id="PRU00159"/>
    </source>
</evidence>
<evidence type="ECO:0000255" key="2">
    <source>
        <dbReference type="PROSITE-ProRule" id="PRU10027"/>
    </source>
</evidence>
<evidence type="ECO:0000256" key="3">
    <source>
        <dbReference type="SAM" id="MobiDB-lite"/>
    </source>
</evidence>
<evidence type="ECO:0000305" key="4"/>
<organism>
    <name type="scientific">Dictyostelium discoideum</name>
    <name type="common">Social amoeba</name>
    <dbReference type="NCBI Taxonomy" id="44689"/>
    <lineage>
        <taxon>Eukaryota</taxon>
        <taxon>Amoebozoa</taxon>
        <taxon>Evosea</taxon>
        <taxon>Eumycetozoa</taxon>
        <taxon>Dictyostelia</taxon>
        <taxon>Dictyosteliales</taxon>
        <taxon>Dictyosteliaceae</taxon>
        <taxon>Dictyostelium</taxon>
    </lineage>
</organism>
<keyword id="KW-0067">ATP-binding</keyword>
<keyword id="KW-0418">Kinase</keyword>
<keyword id="KW-0547">Nucleotide-binding</keyword>
<keyword id="KW-1185">Reference proteome</keyword>
<keyword id="KW-0723">Serine/threonine-protein kinase</keyword>
<keyword id="KW-0808">Transferase</keyword>
<reference key="1">
    <citation type="journal article" date="2005" name="Nature">
        <title>The genome of the social amoeba Dictyostelium discoideum.</title>
        <authorList>
            <person name="Eichinger L."/>
            <person name="Pachebat J.A."/>
            <person name="Gloeckner G."/>
            <person name="Rajandream M.A."/>
            <person name="Sucgang R."/>
            <person name="Berriman M."/>
            <person name="Song J."/>
            <person name="Olsen R."/>
            <person name="Szafranski K."/>
            <person name="Xu Q."/>
            <person name="Tunggal B."/>
            <person name="Kummerfeld S."/>
            <person name="Madera M."/>
            <person name="Konfortov B.A."/>
            <person name="Rivero F."/>
            <person name="Bankier A.T."/>
            <person name="Lehmann R."/>
            <person name="Hamlin N."/>
            <person name="Davies R."/>
            <person name="Gaudet P."/>
            <person name="Fey P."/>
            <person name="Pilcher K."/>
            <person name="Chen G."/>
            <person name="Saunders D."/>
            <person name="Sodergren E.J."/>
            <person name="Davis P."/>
            <person name="Kerhornou A."/>
            <person name="Nie X."/>
            <person name="Hall N."/>
            <person name="Anjard C."/>
            <person name="Hemphill L."/>
            <person name="Bason N."/>
            <person name="Farbrother P."/>
            <person name="Desany B."/>
            <person name="Just E."/>
            <person name="Morio T."/>
            <person name="Rost R."/>
            <person name="Churcher C.M."/>
            <person name="Cooper J."/>
            <person name="Haydock S."/>
            <person name="van Driessche N."/>
            <person name="Cronin A."/>
            <person name="Goodhead I."/>
            <person name="Muzny D.M."/>
            <person name="Mourier T."/>
            <person name="Pain A."/>
            <person name="Lu M."/>
            <person name="Harper D."/>
            <person name="Lindsay R."/>
            <person name="Hauser H."/>
            <person name="James K.D."/>
            <person name="Quiles M."/>
            <person name="Madan Babu M."/>
            <person name="Saito T."/>
            <person name="Buchrieser C."/>
            <person name="Wardroper A."/>
            <person name="Felder M."/>
            <person name="Thangavelu M."/>
            <person name="Johnson D."/>
            <person name="Knights A."/>
            <person name="Loulseged H."/>
            <person name="Mungall K.L."/>
            <person name="Oliver K."/>
            <person name="Price C."/>
            <person name="Quail M.A."/>
            <person name="Urushihara H."/>
            <person name="Hernandez J."/>
            <person name="Rabbinowitsch E."/>
            <person name="Steffen D."/>
            <person name="Sanders M."/>
            <person name="Ma J."/>
            <person name="Kohara Y."/>
            <person name="Sharp S."/>
            <person name="Simmonds M.N."/>
            <person name="Spiegler S."/>
            <person name="Tivey A."/>
            <person name="Sugano S."/>
            <person name="White B."/>
            <person name="Walker D."/>
            <person name="Woodward J.R."/>
            <person name="Winckler T."/>
            <person name="Tanaka Y."/>
            <person name="Shaulsky G."/>
            <person name="Schleicher M."/>
            <person name="Weinstock G.M."/>
            <person name="Rosenthal A."/>
            <person name="Cox E.C."/>
            <person name="Chisholm R.L."/>
            <person name="Gibbs R.A."/>
            <person name="Loomis W.F."/>
            <person name="Platzer M."/>
            <person name="Kay R.R."/>
            <person name="Williams J.G."/>
            <person name="Dear P.H."/>
            <person name="Noegel A.A."/>
            <person name="Barrell B.G."/>
            <person name="Kuspa A."/>
        </authorList>
    </citation>
    <scope>NUCLEOTIDE SEQUENCE [LARGE SCALE GENOMIC DNA]</scope>
    <source>
        <strain>AX4</strain>
    </source>
</reference>
<accession>Q54UA9</accession>
<sequence length="932" mass="107060">MDRFQTKRKTYSYNGYSNNDYGYYNNNCSNVNYNNDIHYKNNNYNNNNNNNNSNSGNNFNNNNNNNNNNNNNNNNNNNNNNNNNNYTYGNNNNNNSNNNNNNINNNGNSNNNNNNSNGSENNYFQSENQSNKDQNSYFNSSYLRNPVDNYNHNNNNHNNNAFDNNNYNTQNLGDYSYKNDGYNNDNNNNDNNNSYGDTDREKYSIEKICNENDYDSVNNNNNNRNYSNSYNNNNYNDGNNNYNSNNYNYNNNNNNNNNINNNNNSNSNSNSNSNSNSNSNSNSNSNNNNYNNYGYNNHKSNNGGNRYSDDDDNVFNNNNNNNNNNNNNYNNYNSNNNYNNDYDYNDGKRANIYSRNNSNNNNNSKSGNNNSNNYNHNNSNNNGGYNNYNNGYNNYNNNNSNNSNHNSSYNNNNNNNYNNNNNNNNNNNNNNNNNNNNNNNNNNNNNNNNNNNNNNNNNNNNNNNNNNNISNNSNNNNFNYNNDNDRNNSNGNYNNNSSNINNNNNNNNNSNSYHNSCISYSNGGSNSKNSNKNNYNNQQSNANGNHVGNSKNNESCNNTNTNIEKSNKSMWDDENDYYKVQVGEYLNNRYKVLCTVGSGTFSTVVECWDTNSSGQVAIKIVRSAKKYTEDALVEIDILRNLEKTGNSNGKYLSHCIRLLDSFLFKDHICLVFKRYGLSLYEFLKKNRYRPLPLSQIQNISKQLLTAIYSMHKLSLVHTDLKPENILLESSRFTYFDNSIPLQFKNSIDTTSNNSVDHYCHLVDTDIVVIDFGGATFENTHHTAIVCSRPYRPPEIILGMGWSYPCDIWGVGCILVELYLGYTLFDTHNNVQHLAMMEKVMGPFPNSMSNVSKKYFNDYGTLNRPQNSDEIKSMERVEGLKQLKEYFHPCHDSFFDLASRLLEYQPSKRISASDALSHPFLFETIENDCFGPI</sequence>
<gene>
    <name type="primary">clkA</name>
    <name type="ORF">DDB_G0281179</name>
</gene>
<feature type="chain" id="PRO_0000355206" description="Probable serine/threonine-protein kinase clkA">
    <location>
        <begin position="1"/>
        <end position="932"/>
    </location>
</feature>
<feature type="domain" description="Protein kinase" evidence="1">
    <location>
        <begin position="590"/>
        <end position="920"/>
    </location>
</feature>
<feature type="region of interest" description="Disordered" evidence="3">
    <location>
        <begin position="1"/>
        <end position="21"/>
    </location>
</feature>
<feature type="region of interest" description="Disordered" evidence="3">
    <location>
        <begin position="39"/>
        <end position="198"/>
    </location>
</feature>
<feature type="region of interest" description="Disordered" evidence="3">
    <location>
        <begin position="212"/>
        <end position="562"/>
    </location>
</feature>
<feature type="compositionally biased region" description="Basic residues" evidence="3">
    <location>
        <begin position="1"/>
        <end position="10"/>
    </location>
</feature>
<feature type="compositionally biased region" description="Low complexity" evidence="3">
    <location>
        <begin position="11"/>
        <end position="21"/>
    </location>
</feature>
<feature type="compositionally biased region" description="Low complexity" evidence="3">
    <location>
        <begin position="39"/>
        <end position="123"/>
    </location>
</feature>
<feature type="compositionally biased region" description="Polar residues" evidence="3">
    <location>
        <begin position="124"/>
        <end position="143"/>
    </location>
</feature>
<feature type="compositionally biased region" description="Low complexity" evidence="3">
    <location>
        <begin position="148"/>
        <end position="196"/>
    </location>
</feature>
<feature type="compositionally biased region" description="Low complexity" evidence="3">
    <location>
        <begin position="218"/>
        <end position="305"/>
    </location>
</feature>
<feature type="compositionally biased region" description="Low complexity" evidence="3">
    <location>
        <begin position="314"/>
        <end position="342"/>
    </location>
</feature>
<feature type="compositionally biased region" description="Low complexity" evidence="3">
    <location>
        <begin position="351"/>
        <end position="562"/>
    </location>
</feature>
<feature type="active site" description="Proton acceptor" evidence="1 2">
    <location>
        <position position="719"/>
    </location>
</feature>
<feature type="binding site" evidence="1">
    <location>
        <begin position="596"/>
        <end position="604"/>
    </location>
    <ligand>
        <name>ATP</name>
        <dbReference type="ChEBI" id="CHEBI:30616"/>
    </ligand>
</feature>
<feature type="binding site" evidence="1">
    <location>
        <position position="619"/>
    </location>
    <ligand>
        <name>ATP</name>
        <dbReference type="ChEBI" id="CHEBI:30616"/>
    </ligand>
</feature>
<dbReference type="EC" id="2.7.11.1"/>
<dbReference type="EMBL" id="AAFI02000040">
    <property type="protein sequence ID" value="EAL66886.1"/>
    <property type="molecule type" value="Genomic_DNA"/>
</dbReference>
<dbReference type="RefSeq" id="XP_640867.1">
    <property type="nucleotide sequence ID" value="XM_635775.1"/>
</dbReference>
<dbReference type="SMR" id="Q54UA9"/>
<dbReference type="STRING" id="44689.Q54UA9"/>
<dbReference type="PaxDb" id="44689-DDB0230105"/>
<dbReference type="EnsemblProtists" id="EAL66886">
    <property type="protein sequence ID" value="EAL66886"/>
    <property type="gene ID" value="DDB_G0281179"/>
</dbReference>
<dbReference type="GeneID" id="8622923"/>
<dbReference type="KEGG" id="ddi:DDB_G0281179"/>
<dbReference type="dictyBase" id="DDB_G0281179">
    <property type="gene designation" value="clkA"/>
</dbReference>
<dbReference type="VEuPathDB" id="AmoebaDB:DDB_G0281179"/>
<dbReference type="eggNOG" id="KOG0671">
    <property type="taxonomic scope" value="Eukaryota"/>
</dbReference>
<dbReference type="HOGENOM" id="CLU_314091_0_0_1"/>
<dbReference type="InParanoid" id="Q54UA9"/>
<dbReference type="OMA" id="MCLVFEP"/>
<dbReference type="PRO" id="PR:Q54UA9"/>
<dbReference type="Proteomes" id="UP000002195">
    <property type="component" value="Chromosome 3"/>
</dbReference>
<dbReference type="GO" id="GO:0005634">
    <property type="term" value="C:nucleus"/>
    <property type="evidence" value="ECO:0000318"/>
    <property type="project" value="GO_Central"/>
</dbReference>
<dbReference type="GO" id="GO:0005524">
    <property type="term" value="F:ATP binding"/>
    <property type="evidence" value="ECO:0007669"/>
    <property type="project" value="UniProtKB-KW"/>
</dbReference>
<dbReference type="GO" id="GO:0106310">
    <property type="term" value="F:protein serine kinase activity"/>
    <property type="evidence" value="ECO:0007669"/>
    <property type="project" value="RHEA"/>
</dbReference>
<dbReference type="GO" id="GO:0004674">
    <property type="term" value="F:protein serine/threonine kinase activity"/>
    <property type="evidence" value="ECO:0000318"/>
    <property type="project" value="GO_Central"/>
</dbReference>
<dbReference type="GO" id="GO:0006468">
    <property type="term" value="P:protein phosphorylation"/>
    <property type="evidence" value="ECO:0000250"/>
    <property type="project" value="dictyBase"/>
</dbReference>
<dbReference type="GO" id="GO:0043484">
    <property type="term" value="P:regulation of RNA splicing"/>
    <property type="evidence" value="ECO:0000318"/>
    <property type="project" value="GO_Central"/>
</dbReference>
<dbReference type="CDD" id="cd14134">
    <property type="entry name" value="PKc_CLK"/>
    <property type="match status" value="1"/>
</dbReference>
<dbReference type="Gene3D" id="3.30.200.20">
    <property type="entry name" value="Phosphorylase Kinase, domain 1"/>
    <property type="match status" value="1"/>
</dbReference>
<dbReference type="Gene3D" id="1.10.510.10">
    <property type="entry name" value="Transferase(Phosphotransferase) domain 1"/>
    <property type="match status" value="1"/>
</dbReference>
<dbReference type="InterPro" id="IPR051175">
    <property type="entry name" value="CLK_kinases"/>
</dbReference>
<dbReference type="InterPro" id="IPR011009">
    <property type="entry name" value="Kinase-like_dom_sf"/>
</dbReference>
<dbReference type="InterPro" id="IPR000719">
    <property type="entry name" value="Prot_kinase_dom"/>
</dbReference>
<dbReference type="InterPro" id="IPR017441">
    <property type="entry name" value="Protein_kinase_ATP_BS"/>
</dbReference>
<dbReference type="InterPro" id="IPR008271">
    <property type="entry name" value="Ser/Thr_kinase_AS"/>
</dbReference>
<dbReference type="PANTHER" id="PTHR45646">
    <property type="entry name" value="SERINE/THREONINE-PROTEIN KINASE DOA-RELATED"/>
    <property type="match status" value="1"/>
</dbReference>
<dbReference type="PANTHER" id="PTHR45646:SF11">
    <property type="entry name" value="SERINE_THREONINE-PROTEIN KINASE DOA"/>
    <property type="match status" value="1"/>
</dbReference>
<dbReference type="Pfam" id="PF00069">
    <property type="entry name" value="Pkinase"/>
    <property type="match status" value="1"/>
</dbReference>
<dbReference type="SMART" id="SM00220">
    <property type="entry name" value="S_TKc"/>
    <property type="match status" value="1"/>
</dbReference>
<dbReference type="SUPFAM" id="SSF56112">
    <property type="entry name" value="Protein kinase-like (PK-like)"/>
    <property type="match status" value="1"/>
</dbReference>
<dbReference type="PROSITE" id="PS00107">
    <property type="entry name" value="PROTEIN_KINASE_ATP"/>
    <property type="match status" value="1"/>
</dbReference>
<dbReference type="PROSITE" id="PS50011">
    <property type="entry name" value="PROTEIN_KINASE_DOM"/>
    <property type="match status" value="1"/>
</dbReference>
<dbReference type="PROSITE" id="PS00108">
    <property type="entry name" value="PROTEIN_KINASE_ST"/>
    <property type="match status" value="1"/>
</dbReference>
<comment type="catalytic activity">
    <reaction>
        <text>L-seryl-[protein] + ATP = O-phospho-L-seryl-[protein] + ADP + H(+)</text>
        <dbReference type="Rhea" id="RHEA:17989"/>
        <dbReference type="Rhea" id="RHEA-COMP:9863"/>
        <dbReference type="Rhea" id="RHEA-COMP:11604"/>
        <dbReference type="ChEBI" id="CHEBI:15378"/>
        <dbReference type="ChEBI" id="CHEBI:29999"/>
        <dbReference type="ChEBI" id="CHEBI:30616"/>
        <dbReference type="ChEBI" id="CHEBI:83421"/>
        <dbReference type="ChEBI" id="CHEBI:456216"/>
        <dbReference type="EC" id="2.7.11.1"/>
    </reaction>
</comment>
<comment type="catalytic activity">
    <reaction>
        <text>L-threonyl-[protein] + ATP = O-phospho-L-threonyl-[protein] + ADP + H(+)</text>
        <dbReference type="Rhea" id="RHEA:46608"/>
        <dbReference type="Rhea" id="RHEA-COMP:11060"/>
        <dbReference type="Rhea" id="RHEA-COMP:11605"/>
        <dbReference type="ChEBI" id="CHEBI:15378"/>
        <dbReference type="ChEBI" id="CHEBI:30013"/>
        <dbReference type="ChEBI" id="CHEBI:30616"/>
        <dbReference type="ChEBI" id="CHEBI:61977"/>
        <dbReference type="ChEBI" id="CHEBI:456216"/>
        <dbReference type="EC" id="2.7.11.1"/>
    </reaction>
</comment>
<comment type="similarity">
    <text evidence="4">Belongs to the protein kinase superfamily. CMGC Ser/Thr protein kinase family.</text>
</comment>